<keyword id="KW-0119">Carbohydrate metabolism</keyword>
<keyword id="KW-0520">NAD</keyword>
<keyword id="KW-0521">NADP</keyword>
<keyword id="KW-0560">Oxidoreductase</keyword>
<keyword id="KW-1185">Reference proteome</keyword>
<gene>
    <name evidence="1" type="primary">ltnD</name>
    <name type="synonym">ygbJ</name>
    <name type="ordered locus">b2736</name>
    <name type="ordered locus">JW2706</name>
</gene>
<proteinExistence type="inferred from homology"/>
<protein>
    <recommendedName>
        <fullName evidence="1">L-threonate dehydrogenase</fullName>
        <ecNumber evidence="1">1.1.1.411</ecNumber>
    </recommendedName>
</protein>
<dbReference type="EC" id="1.1.1.411" evidence="1"/>
<dbReference type="EMBL" id="U29579">
    <property type="protein sequence ID" value="AAA69246.1"/>
    <property type="molecule type" value="Genomic_DNA"/>
</dbReference>
<dbReference type="EMBL" id="U00096">
    <property type="protein sequence ID" value="AAC75778.1"/>
    <property type="molecule type" value="Genomic_DNA"/>
</dbReference>
<dbReference type="EMBL" id="AP009048">
    <property type="protein sequence ID" value="BAE76813.1"/>
    <property type="molecule type" value="Genomic_DNA"/>
</dbReference>
<dbReference type="PIR" id="D65054">
    <property type="entry name" value="D65054"/>
</dbReference>
<dbReference type="RefSeq" id="NP_417216.1">
    <property type="nucleotide sequence ID" value="NC_000913.3"/>
</dbReference>
<dbReference type="RefSeq" id="WP_000848004.1">
    <property type="nucleotide sequence ID" value="NZ_LN832404.1"/>
</dbReference>
<dbReference type="SMR" id="Q46888"/>
<dbReference type="BioGRID" id="4261443">
    <property type="interactions" value="20"/>
</dbReference>
<dbReference type="FunCoup" id="Q46888">
    <property type="interactions" value="286"/>
</dbReference>
<dbReference type="IntAct" id="Q46888">
    <property type="interactions" value="3"/>
</dbReference>
<dbReference type="STRING" id="511145.b2736"/>
<dbReference type="PaxDb" id="511145-b2736"/>
<dbReference type="EnsemblBacteria" id="AAC75778">
    <property type="protein sequence ID" value="AAC75778"/>
    <property type="gene ID" value="b2736"/>
</dbReference>
<dbReference type="GeneID" id="947200"/>
<dbReference type="KEGG" id="ecj:JW2706"/>
<dbReference type="KEGG" id="eco:b2736"/>
<dbReference type="KEGG" id="ecoc:C3026_15050"/>
<dbReference type="PATRIC" id="fig|1411691.4.peg.4004"/>
<dbReference type="EchoBASE" id="EB2907"/>
<dbReference type="eggNOG" id="COG2084">
    <property type="taxonomic scope" value="Bacteria"/>
</dbReference>
<dbReference type="HOGENOM" id="CLU_035117_1_2_6"/>
<dbReference type="InParanoid" id="Q46888"/>
<dbReference type="OMA" id="QMFMQAS"/>
<dbReference type="OrthoDB" id="9786703at2"/>
<dbReference type="PhylomeDB" id="Q46888"/>
<dbReference type="BioCyc" id="EcoCyc:G7417-MONOMER"/>
<dbReference type="PRO" id="PR:Q46888"/>
<dbReference type="Proteomes" id="UP000000625">
    <property type="component" value="Chromosome"/>
</dbReference>
<dbReference type="GO" id="GO:0051287">
    <property type="term" value="F:NAD binding"/>
    <property type="evidence" value="ECO:0007669"/>
    <property type="project" value="InterPro"/>
</dbReference>
<dbReference type="GO" id="GO:0050661">
    <property type="term" value="F:NADP binding"/>
    <property type="evidence" value="ECO:0007669"/>
    <property type="project" value="InterPro"/>
</dbReference>
<dbReference type="GO" id="GO:0016616">
    <property type="term" value="F:oxidoreductase activity, acting on the CH-OH group of donors, NAD or NADP as acceptor"/>
    <property type="evidence" value="ECO:0007669"/>
    <property type="project" value="InterPro"/>
</dbReference>
<dbReference type="GO" id="GO:0016054">
    <property type="term" value="P:organic acid catabolic process"/>
    <property type="evidence" value="ECO:0007669"/>
    <property type="project" value="UniProtKB-ARBA"/>
</dbReference>
<dbReference type="Gene3D" id="1.10.1040.10">
    <property type="entry name" value="N-(1-d-carboxylethyl)-l-norvaline Dehydrogenase, domain 2"/>
    <property type="match status" value="1"/>
</dbReference>
<dbReference type="Gene3D" id="3.40.50.720">
    <property type="entry name" value="NAD(P)-binding Rossmann-like Domain"/>
    <property type="match status" value="1"/>
</dbReference>
<dbReference type="InterPro" id="IPR002204">
    <property type="entry name" value="3-OH-isobutyrate_DH-rel_CS"/>
</dbReference>
<dbReference type="InterPro" id="IPR008927">
    <property type="entry name" value="6-PGluconate_DH-like_C_sf"/>
</dbReference>
<dbReference type="InterPro" id="IPR013328">
    <property type="entry name" value="6PGD_dom2"/>
</dbReference>
<dbReference type="InterPro" id="IPR006115">
    <property type="entry name" value="6PGDH_NADP-bd"/>
</dbReference>
<dbReference type="InterPro" id="IPR029154">
    <property type="entry name" value="HIBADH-like_NADP-bd"/>
</dbReference>
<dbReference type="InterPro" id="IPR015815">
    <property type="entry name" value="HIBADH-related"/>
</dbReference>
<dbReference type="InterPro" id="IPR050006">
    <property type="entry name" value="LtnD"/>
</dbReference>
<dbReference type="InterPro" id="IPR036291">
    <property type="entry name" value="NAD(P)-bd_dom_sf"/>
</dbReference>
<dbReference type="NCBIfam" id="NF043037">
    <property type="entry name" value="ThreonDh"/>
    <property type="match status" value="1"/>
</dbReference>
<dbReference type="PANTHER" id="PTHR43060">
    <property type="entry name" value="3-HYDROXYISOBUTYRATE DEHYDROGENASE-LIKE 1, MITOCHONDRIAL-RELATED"/>
    <property type="match status" value="1"/>
</dbReference>
<dbReference type="PANTHER" id="PTHR43060:SF17">
    <property type="entry name" value="L-THREONATE DEHYDROGENASE"/>
    <property type="match status" value="1"/>
</dbReference>
<dbReference type="Pfam" id="PF14833">
    <property type="entry name" value="NAD_binding_11"/>
    <property type="match status" value="1"/>
</dbReference>
<dbReference type="Pfam" id="PF03446">
    <property type="entry name" value="NAD_binding_2"/>
    <property type="match status" value="1"/>
</dbReference>
<dbReference type="PIRSF" id="PIRSF000103">
    <property type="entry name" value="HIBADH"/>
    <property type="match status" value="1"/>
</dbReference>
<dbReference type="SUPFAM" id="SSF48179">
    <property type="entry name" value="6-phosphogluconate dehydrogenase C-terminal domain-like"/>
    <property type="match status" value="1"/>
</dbReference>
<dbReference type="SUPFAM" id="SSF51735">
    <property type="entry name" value="NAD(P)-binding Rossmann-fold domains"/>
    <property type="match status" value="1"/>
</dbReference>
<dbReference type="PROSITE" id="PS00895">
    <property type="entry name" value="3_HYDROXYISOBUT_DH"/>
    <property type="match status" value="1"/>
</dbReference>
<reference key="1">
    <citation type="journal article" date="1997" name="Science">
        <title>The complete genome sequence of Escherichia coli K-12.</title>
        <authorList>
            <person name="Blattner F.R."/>
            <person name="Plunkett G. III"/>
            <person name="Bloch C.A."/>
            <person name="Perna N.T."/>
            <person name="Burland V."/>
            <person name="Riley M."/>
            <person name="Collado-Vides J."/>
            <person name="Glasner J.D."/>
            <person name="Rode C.K."/>
            <person name="Mayhew G.F."/>
            <person name="Gregor J."/>
            <person name="Davis N.W."/>
            <person name="Kirkpatrick H.A."/>
            <person name="Goeden M.A."/>
            <person name="Rose D.J."/>
            <person name="Mau B."/>
            <person name="Shao Y."/>
        </authorList>
    </citation>
    <scope>NUCLEOTIDE SEQUENCE [LARGE SCALE GENOMIC DNA]</scope>
    <source>
        <strain>K12 / MG1655 / ATCC 47076</strain>
    </source>
</reference>
<reference key="2">
    <citation type="journal article" date="2006" name="Mol. Syst. Biol.">
        <title>Highly accurate genome sequences of Escherichia coli K-12 strains MG1655 and W3110.</title>
        <authorList>
            <person name="Hayashi K."/>
            <person name="Morooka N."/>
            <person name="Yamamoto Y."/>
            <person name="Fujita K."/>
            <person name="Isono K."/>
            <person name="Choi S."/>
            <person name="Ohtsubo E."/>
            <person name="Baba T."/>
            <person name="Wanner B.L."/>
            <person name="Mori H."/>
            <person name="Horiuchi T."/>
        </authorList>
    </citation>
    <scope>NUCLEOTIDE SEQUENCE [LARGE SCALE GENOMIC DNA]</scope>
    <source>
        <strain>K12 / W3110 / ATCC 27325 / DSM 5911</strain>
    </source>
</reference>
<comment type="function">
    <text evidence="1">Catalyzes oxidation of L-threonate to 2-oxo-tetronate. Can use either NAD(+) or NADP(+) as cosubstrate, with a preference for NAD(+).</text>
</comment>
<comment type="catalytic activity">
    <reaction evidence="1">
        <text>L-threonate + NAD(+) = 2-dehydro-L-erythronate + NADH + H(+)</text>
        <dbReference type="Rhea" id="RHEA:52548"/>
        <dbReference type="ChEBI" id="CHEBI:15378"/>
        <dbReference type="ChEBI" id="CHEBI:57540"/>
        <dbReference type="ChEBI" id="CHEBI:57561"/>
        <dbReference type="ChEBI" id="CHEBI:57945"/>
        <dbReference type="ChEBI" id="CHEBI:136669"/>
        <dbReference type="EC" id="1.1.1.411"/>
    </reaction>
</comment>
<comment type="similarity">
    <text evidence="4">Belongs to the HIBADH-related family. L-threonate dehydrogenase subfamily.</text>
</comment>
<organism>
    <name type="scientific">Escherichia coli (strain K12)</name>
    <dbReference type="NCBI Taxonomy" id="83333"/>
    <lineage>
        <taxon>Bacteria</taxon>
        <taxon>Pseudomonadati</taxon>
        <taxon>Pseudomonadota</taxon>
        <taxon>Gammaproteobacteria</taxon>
        <taxon>Enterobacterales</taxon>
        <taxon>Enterobacteriaceae</taxon>
        <taxon>Escherichia</taxon>
    </lineage>
</organism>
<name>LTND_ECOLI</name>
<sequence>MKTGSEFHVGIVGLGSMGMGAALSYVRAGLSTWGADLNSNACATLKEAGACGVSDNAATFAEKLDALLVLVVNAAQVKQVLFGETGVAQHLKPGTAVMVSSTIASADAQEIATALAGFDLEMLDAPVSGGAVKAANGEMTVMASGSDIAFERLAPVLEAVAGKVYRIGAEPGLGSTVKIIHQLLAGVHIAAGAEAMALAARAGIPLDVMYDVVTNAAGNSWMFENRMRHVVDGDYTPHSAVDIFVKDLGLVADTAKALHFPLPLASTALNMFTSASNAGYGKEDDSAVIKIFSGITLPGAKS</sequence>
<accession>Q46888</accession>
<accession>Q2MA93</accession>
<feature type="chain" id="PRO_0000173062" description="L-threonate dehydrogenase">
    <location>
        <begin position="1"/>
        <end position="302"/>
    </location>
</feature>
<feature type="active site" evidence="3">
    <location>
        <position position="178"/>
    </location>
</feature>
<feature type="binding site" evidence="2">
    <location>
        <begin position="7"/>
        <end position="35"/>
    </location>
    <ligand>
        <name>NAD(+)</name>
        <dbReference type="ChEBI" id="CHEBI:57540"/>
    </ligand>
</feature>
<feature type="binding site" evidence="2">
    <location>
        <position position="102"/>
    </location>
    <ligand>
        <name>NAD(+)</name>
        <dbReference type="ChEBI" id="CHEBI:57540"/>
    </ligand>
</feature>
<feature type="binding site" evidence="2">
    <location>
        <position position="246"/>
    </location>
    <ligand>
        <name>NAD(+)</name>
        <dbReference type="ChEBI" id="CHEBI:57540"/>
    </ligand>
</feature>
<evidence type="ECO:0000250" key="1">
    <source>
        <dbReference type="UniProtKB" id="A0A0H2VA68"/>
    </source>
</evidence>
<evidence type="ECO:0000250" key="2">
    <source>
        <dbReference type="UniProtKB" id="P31937"/>
    </source>
</evidence>
<evidence type="ECO:0000250" key="3">
    <source>
        <dbReference type="UniProtKB" id="Q9I5I6"/>
    </source>
</evidence>
<evidence type="ECO:0000305" key="4"/>